<reference evidence="6" key="1">
    <citation type="journal article" date="1998" name="Science">
        <title>Genome sequence of the nematode C. elegans: a platform for investigating biology.</title>
        <authorList>
            <consortium name="The C. elegans sequencing consortium"/>
        </authorList>
    </citation>
    <scope>NUCLEOTIDE SEQUENCE [LARGE SCALE GENOMIC DNA]</scope>
    <source>
        <strain evidence="6">Bristol N2</strain>
    </source>
</reference>
<dbReference type="EMBL" id="BX284604">
    <property type="protein sequence ID" value="CAA94370.2"/>
    <property type="molecule type" value="Genomic_DNA"/>
</dbReference>
<dbReference type="EMBL" id="BX284604">
    <property type="protein sequence ID" value="CAB54294.2"/>
    <property type="molecule type" value="Genomic_DNA"/>
</dbReference>
<dbReference type="EMBL" id="BX284604">
    <property type="protein sequence ID" value="CAM35836.1"/>
    <property type="molecule type" value="Genomic_DNA"/>
</dbReference>
<dbReference type="EMBL" id="BX284604">
    <property type="protein sequence ID" value="CAM35837.1"/>
    <property type="molecule type" value="Genomic_DNA"/>
</dbReference>
<dbReference type="EMBL" id="BX284604">
    <property type="protein sequence ID" value="CCQ25661.1"/>
    <property type="molecule type" value="Genomic_DNA"/>
</dbReference>
<dbReference type="EMBL" id="BX284604">
    <property type="protein sequence ID" value="CCQ25715.1"/>
    <property type="molecule type" value="Genomic_DNA"/>
</dbReference>
<dbReference type="EMBL" id="BX284604">
    <property type="protein sequence ID" value="CCQ25716.1"/>
    <property type="molecule type" value="Genomic_DNA"/>
</dbReference>
<dbReference type="EMBL" id="BX284604">
    <property type="protein sequence ID" value="CBK19467.1"/>
    <property type="molecule type" value="Genomic_DNA"/>
</dbReference>
<dbReference type="PIR" id="T24157">
    <property type="entry name" value="T24157"/>
</dbReference>
<dbReference type="PIR" id="T24158">
    <property type="entry name" value="T24158"/>
</dbReference>
<dbReference type="RefSeq" id="NP_001122794.1">
    <molecule id="Q21920-3"/>
    <property type="nucleotide sequence ID" value="NM_001129322.4"/>
</dbReference>
<dbReference type="RefSeq" id="NP_001122795.1">
    <molecule id="Q21920-4"/>
    <property type="nucleotide sequence ID" value="NM_001129323.4"/>
</dbReference>
<dbReference type="RefSeq" id="NP_001255486.1">
    <molecule id="Q21920-5"/>
    <property type="nucleotide sequence ID" value="NM_001268557.3"/>
</dbReference>
<dbReference type="RefSeq" id="NP_001263772.1">
    <molecule id="Q21920-6"/>
    <property type="nucleotide sequence ID" value="NM_001276843.3"/>
</dbReference>
<dbReference type="RefSeq" id="NP_001263773.1">
    <molecule id="Q21920-7"/>
    <property type="nucleotide sequence ID" value="NM_001276844.3"/>
</dbReference>
<dbReference type="RefSeq" id="NP_001263774.1">
    <property type="nucleotide sequence ID" value="NM_001276845.1"/>
</dbReference>
<dbReference type="RefSeq" id="NP_001368167.1">
    <molecule id="Q21920-8"/>
    <property type="nucleotide sequence ID" value="NM_001380446.2"/>
</dbReference>
<dbReference type="RefSeq" id="NP_501915.2">
    <molecule id="Q21920-1"/>
    <property type="nucleotide sequence ID" value="NM_069514.3"/>
</dbReference>
<dbReference type="RefSeq" id="NP_501916.2">
    <molecule id="Q21920-2"/>
    <property type="nucleotide sequence ID" value="NM_069515.4"/>
</dbReference>
<dbReference type="SMR" id="Q21920"/>
<dbReference type="BioGRID" id="2553929">
    <property type="interactions" value="1"/>
</dbReference>
<dbReference type="BioGRID" id="43029">
    <property type="interactions" value="6"/>
</dbReference>
<dbReference type="FunCoup" id="Q21920">
    <property type="interactions" value="2248"/>
</dbReference>
<dbReference type="IntAct" id="Q21920">
    <property type="interactions" value="2"/>
</dbReference>
<dbReference type="STRING" id="6239.R11A8.7f.1"/>
<dbReference type="PaxDb" id="6239-R11A8.7f"/>
<dbReference type="PeptideAtlas" id="Q21920"/>
<dbReference type="EnsemblMetazoa" id="R11A8.7a.1">
    <molecule id="Q21920-1"/>
    <property type="protein sequence ID" value="R11A8.7a.1"/>
    <property type="gene ID" value="WBGene00011240"/>
</dbReference>
<dbReference type="EnsemblMetazoa" id="R11A8.7b.1">
    <molecule id="Q21920-2"/>
    <property type="protein sequence ID" value="R11A8.7b.1"/>
    <property type="gene ID" value="WBGene00011240"/>
</dbReference>
<dbReference type="EnsemblMetazoa" id="R11A8.7c.1">
    <molecule id="Q21920-3"/>
    <property type="protein sequence ID" value="R11A8.7c.1"/>
    <property type="gene ID" value="WBGene00011240"/>
</dbReference>
<dbReference type="EnsemblMetazoa" id="R11A8.7d.1">
    <molecule id="Q21920-4"/>
    <property type="protein sequence ID" value="R11A8.7d.1"/>
    <property type="gene ID" value="WBGene00011240"/>
</dbReference>
<dbReference type="EnsemblMetazoa" id="R11A8.7e.1">
    <molecule id="Q21920-5"/>
    <property type="protein sequence ID" value="R11A8.7e.1"/>
    <property type="gene ID" value="WBGene00011240"/>
</dbReference>
<dbReference type="EnsemblMetazoa" id="R11A8.7f.1">
    <molecule id="Q21920-6"/>
    <property type="protein sequence ID" value="R11A8.7f.1"/>
    <property type="gene ID" value="WBGene00011240"/>
</dbReference>
<dbReference type="EnsemblMetazoa" id="R11A8.7g.1">
    <molecule id="Q21920-7"/>
    <property type="protein sequence ID" value="R11A8.7g.1"/>
    <property type="gene ID" value="WBGene00011240"/>
</dbReference>
<dbReference type="EnsemblMetazoa" id="R11A8.7h.1">
    <molecule id="Q21920-8"/>
    <property type="protein sequence ID" value="R11A8.7h.1"/>
    <property type="gene ID" value="WBGene00011240"/>
</dbReference>
<dbReference type="EnsemblMetazoa" id="R11A8.7h.2">
    <molecule id="Q21920-8"/>
    <property type="protein sequence ID" value="R11A8.7h.2"/>
    <property type="gene ID" value="WBGene00011240"/>
</dbReference>
<dbReference type="GeneID" id="177927"/>
<dbReference type="KEGG" id="cel:CELE_R11A8.7"/>
<dbReference type="UCSC" id="R11A8.7a">
    <molecule id="Q21920-1"/>
    <property type="organism name" value="c. elegans"/>
</dbReference>
<dbReference type="AGR" id="WB:WBGene00011240"/>
<dbReference type="CTD" id="177927"/>
<dbReference type="WormBase" id="R11A8.7a">
    <molecule id="Q21920-1"/>
    <property type="protein sequence ID" value="CE43470"/>
    <property type="gene ID" value="WBGene00011240"/>
    <property type="gene designation" value="mask-1"/>
</dbReference>
<dbReference type="WormBase" id="R11A8.7b">
    <molecule id="Q21920-2"/>
    <property type="protein sequence ID" value="CE43456"/>
    <property type="gene ID" value="WBGene00011240"/>
    <property type="gene designation" value="mask-1"/>
</dbReference>
<dbReference type="WormBase" id="R11A8.7c">
    <molecule id="Q21920-3"/>
    <property type="protein sequence ID" value="CE40772"/>
    <property type="gene ID" value="WBGene00011240"/>
    <property type="gene designation" value="mask-1"/>
</dbReference>
<dbReference type="WormBase" id="R11A8.7d">
    <molecule id="Q21920-4"/>
    <property type="protein sequence ID" value="CE40773"/>
    <property type="gene ID" value="WBGene00011240"/>
    <property type="gene designation" value="mask-1"/>
</dbReference>
<dbReference type="WormBase" id="R11A8.7e">
    <molecule id="Q21920-5"/>
    <property type="protein sequence ID" value="CE44619"/>
    <property type="gene ID" value="WBGene00011240"/>
    <property type="gene designation" value="mask-1"/>
</dbReference>
<dbReference type="WormBase" id="R11A8.7f">
    <molecule id="Q21920-6"/>
    <property type="protein sequence ID" value="CE48093"/>
    <property type="gene ID" value="WBGene00011240"/>
    <property type="gene designation" value="mask-1"/>
</dbReference>
<dbReference type="WormBase" id="R11A8.7g">
    <molecule id="Q21920-7"/>
    <property type="protein sequence ID" value="CE48142"/>
    <property type="gene ID" value="WBGene00011240"/>
    <property type="gene designation" value="mask-1"/>
</dbReference>
<dbReference type="WormBase" id="R11A8.7h">
    <molecule id="Q21920-8"/>
    <property type="protein sequence ID" value="CE48120"/>
    <property type="gene ID" value="WBGene00011240"/>
    <property type="gene designation" value="mask-1"/>
</dbReference>
<dbReference type="eggNOG" id="KOG4369">
    <property type="taxonomic scope" value="Eukaryota"/>
</dbReference>
<dbReference type="GeneTree" id="ENSGT00940000174194"/>
<dbReference type="InParanoid" id="Q21920"/>
<dbReference type="OMA" id="NDNGHCA"/>
<dbReference type="OrthoDB" id="20872at2759"/>
<dbReference type="PhylomeDB" id="Q21920"/>
<dbReference type="Reactome" id="R-CEL-8951664">
    <property type="pathway name" value="Neddylation"/>
</dbReference>
<dbReference type="Reactome" id="R-CEL-983168">
    <property type="pathway name" value="Antigen processing: Ubiquitination &amp; Proteasome degradation"/>
</dbReference>
<dbReference type="SignaLink" id="Q21920"/>
<dbReference type="PRO" id="PR:Q21920"/>
<dbReference type="Proteomes" id="UP000001940">
    <property type="component" value="Chromosome IV"/>
</dbReference>
<dbReference type="Bgee" id="WBGene00011240">
    <property type="expression patterns" value="Expressed in adult organism and 4 other cell types or tissues"/>
</dbReference>
<dbReference type="ExpressionAtlas" id="Q21920">
    <property type="expression patterns" value="baseline and differential"/>
</dbReference>
<dbReference type="GO" id="GO:0005737">
    <property type="term" value="C:cytoplasm"/>
    <property type="evidence" value="ECO:0007669"/>
    <property type="project" value="UniProtKB-SubCell"/>
</dbReference>
<dbReference type="GO" id="GO:0003723">
    <property type="term" value="F:RNA binding"/>
    <property type="evidence" value="ECO:0007669"/>
    <property type="project" value="UniProtKB-KW"/>
</dbReference>
<dbReference type="CDD" id="cd22462">
    <property type="entry name" value="KH-I_HEN4_like_rpt5"/>
    <property type="match status" value="1"/>
</dbReference>
<dbReference type="FunFam" id="1.25.40.20:FF:000041">
    <property type="entry name" value="ankyrin repeat and KH domain-containing protein 1 isoform X1"/>
    <property type="match status" value="1"/>
</dbReference>
<dbReference type="Gene3D" id="1.25.40.20">
    <property type="entry name" value="Ankyrin repeat-containing domain"/>
    <property type="match status" value="6"/>
</dbReference>
<dbReference type="Gene3D" id="3.30.1370.10">
    <property type="entry name" value="K Homology domain, type 1"/>
    <property type="match status" value="1"/>
</dbReference>
<dbReference type="InterPro" id="IPR051631">
    <property type="entry name" value="Ankyrin-KH/SAM_domain"/>
</dbReference>
<dbReference type="InterPro" id="IPR002110">
    <property type="entry name" value="Ankyrin_rpt"/>
</dbReference>
<dbReference type="InterPro" id="IPR036770">
    <property type="entry name" value="Ankyrin_rpt-contain_sf"/>
</dbReference>
<dbReference type="InterPro" id="IPR004087">
    <property type="entry name" value="KH_dom"/>
</dbReference>
<dbReference type="InterPro" id="IPR004088">
    <property type="entry name" value="KH_dom_type_1"/>
</dbReference>
<dbReference type="InterPro" id="IPR036612">
    <property type="entry name" value="KH_dom_type_1_sf"/>
</dbReference>
<dbReference type="PANTHER" id="PTHR23206:SF8">
    <property type="entry name" value="ANKYRIN REPEAT AND KH DOMAIN-CONTAINING 1"/>
    <property type="match status" value="1"/>
</dbReference>
<dbReference type="PANTHER" id="PTHR23206">
    <property type="entry name" value="MASK PROTEIN"/>
    <property type="match status" value="1"/>
</dbReference>
<dbReference type="Pfam" id="PF12796">
    <property type="entry name" value="Ank_2"/>
    <property type="match status" value="8"/>
</dbReference>
<dbReference type="Pfam" id="PF00013">
    <property type="entry name" value="KH_1"/>
    <property type="match status" value="1"/>
</dbReference>
<dbReference type="PRINTS" id="PR01415">
    <property type="entry name" value="ANKYRIN"/>
</dbReference>
<dbReference type="SMART" id="SM00248">
    <property type="entry name" value="ANK"/>
    <property type="match status" value="22"/>
</dbReference>
<dbReference type="SMART" id="SM00322">
    <property type="entry name" value="KH"/>
    <property type="match status" value="1"/>
</dbReference>
<dbReference type="SUPFAM" id="SSF48403">
    <property type="entry name" value="Ankyrin repeat"/>
    <property type="match status" value="3"/>
</dbReference>
<dbReference type="SUPFAM" id="SSF54791">
    <property type="entry name" value="Eukaryotic type KH-domain (KH-domain type I)"/>
    <property type="match status" value="1"/>
</dbReference>
<dbReference type="PROSITE" id="PS50297">
    <property type="entry name" value="ANK_REP_REGION"/>
    <property type="match status" value="2"/>
</dbReference>
<dbReference type="PROSITE" id="PS50088">
    <property type="entry name" value="ANK_REPEAT"/>
    <property type="match status" value="15"/>
</dbReference>
<dbReference type="PROSITE" id="PS50084">
    <property type="entry name" value="KH_TYPE_1"/>
    <property type="match status" value="1"/>
</dbReference>
<comment type="subcellular location">
    <subcellularLocation>
        <location evidence="1">Cytoplasm</location>
    </subcellularLocation>
</comment>
<comment type="alternative products">
    <event type="alternative splicing"/>
    <isoform>
        <id>Q21920-1</id>
        <name evidence="7">a</name>
        <sequence type="displayed"/>
    </isoform>
    <isoform>
        <id>Q21920-2</id>
        <name evidence="8">b</name>
        <sequence type="described" ref="VSP_052628"/>
    </isoform>
    <isoform>
        <id>Q21920-3</id>
        <name evidence="9">c</name>
        <sequence type="described" ref="VSP_052627 VSP_052628"/>
    </isoform>
    <isoform>
        <id>Q21920-4</id>
        <name evidence="10">d</name>
        <sequence type="described" ref="VSP_052627"/>
    </isoform>
    <isoform>
        <id>Q21920-5</id>
        <name evidence="11">e</name>
        <sequence type="described" ref="VSP_053226 VSP_052628"/>
    </isoform>
    <isoform>
        <id>Q21920-6</id>
        <name evidence="12">f</name>
        <sequence type="described" ref="VSP_053227"/>
    </isoform>
    <isoform>
        <id>Q21920-7</id>
        <name evidence="13">g</name>
        <sequence type="described" ref="VSP_053227 VSP_052628"/>
    </isoform>
    <isoform>
        <id>Q21920-8</id>
        <name evidence="14">h</name>
        <sequence type="described" ref="VSP_053226 VSP_053227 VSP_052628"/>
    </isoform>
</comment>
<comment type="similarity">
    <text evidence="2">Belongs to the mask family.</text>
</comment>
<feature type="chain" id="PRO_0000312832" description="Ankyrin repeat and KH domain-containing protein mask-1">
    <location>
        <begin position="1"/>
        <end position="2620"/>
    </location>
</feature>
<feature type="repeat" description="ANK 1" evidence="2">
    <location>
        <begin position="254"/>
        <end position="283"/>
    </location>
</feature>
<feature type="repeat" description="ANK 2" evidence="2">
    <location>
        <begin position="288"/>
        <end position="318"/>
    </location>
</feature>
<feature type="repeat" description="ANK 3" evidence="2">
    <location>
        <begin position="361"/>
        <end position="390"/>
    </location>
</feature>
<feature type="repeat" description="ANK 4" evidence="2">
    <location>
        <begin position="402"/>
        <end position="431"/>
    </location>
</feature>
<feature type="repeat" description="ANK 5" evidence="2">
    <location>
        <begin position="437"/>
        <end position="466"/>
    </location>
</feature>
<feature type="repeat" description="ANK 6" evidence="2">
    <location>
        <begin position="470"/>
        <end position="502"/>
    </location>
</feature>
<feature type="repeat" description="ANK 7" evidence="2">
    <location>
        <begin position="507"/>
        <end position="536"/>
    </location>
</feature>
<feature type="repeat" description="ANK 8" evidence="2">
    <location>
        <begin position="538"/>
        <end position="566"/>
    </location>
</feature>
<feature type="repeat" description="ANK 9" evidence="2">
    <location>
        <begin position="568"/>
        <end position="597"/>
    </location>
</feature>
<feature type="repeat" description="ANK 10" evidence="2">
    <location>
        <begin position="600"/>
        <end position="629"/>
    </location>
</feature>
<feature type="repeat" description="ANK 11" evidence="2">
    <location>
        <begin position="634"/>
        <end position="663"/>
    </location>
</feature>
<feature type="repeat" description="ANK 12" evidence="2">
    <location>
        <begin position="667"/>
        <end position="697"/>
    </location>
</feature>
<feature type="repeat" description="ANK 13" evidence="2">
    <location>
        <begin position="1234"/>
        <end position="1263"/>
    </location>
</feature>
<feature type="repeat" description="ANK 14" evidence="2">
    <location>
        <begin position="1267"/>
        <end position="1296"/>
    </location>
</feature>
<feature type="repeat" description="ANK 15" evidence="2">
    <location>
        <begin position="1301"/>
        <end position="1330"/>
    </location>
</feature>
<feature type="repeat" description="ANK 16" evidence="2">
    <location>
        <begin position="1334"/>
        <end position="1363"/>
    </location>
</feature>
<feature type="repeat" description="ANK 17" evidence="2">
    <location>
        <begin position="1369"/>
        <end position="1398"/>
    </location>
</feature>
<feature type="repeat" description="ANK 18" evidence="2">
    <location>
        <begin position="1403"/>
        <end position="1432"/>
    </location>
</feature>
<feature type="repeat" description="ANK 19" evidence="2">
    <location>
        <begin position="1436"/>
        <end position="1465"/>
    </location>
</feature>
<feature type="repeat" description="ANK 20" evidence="2">
    <location>
        <begin position="1471"/>
        <end position="1500"/>
    </location>
</feature>
<feature type="repeat" description="ANK 21" evidence="2">
    <location>
        <begin position="1504"/>
        <end position="1533"/>
    </location>
</feature>
<feature type="repeat" description="ANK 22" evidence="2">
    <location>
        <begin position="1537"/>
        <end position="1566"/>
    </location>
</feature>
<feature type="domain" description="KH" evidence="3">
    <location>
        <begin position="1807"/>
        <end position="1873"/>
    </location>
</feature>
<feature type="region of interest" description="Disordered" evidence="4">
    <location>
        <begin position="699"/>
        <end position="726"/>
    </location>
</feature>
<feature type="region of interest" description="Disordered" evidence="4">
    <location>
        <begin position="994"/>
        <end position="1032"/>
    </location>
</feature>
<feature type="region of interest" description="Disordered" evidence="4">
    <location>
        <begin position="1192"/>
        <end position="1229"/>
    </location>
</feature>
<feature type="region of interest" description="Disordered" evidence="4">
    <location>
        <begin position="1621"/>
        <end position="1720"/>
    </location>
</feature>
<feature type="region of interest" description="Disordered" evidence="4">
    <location>
        <begin position="1759"/>
        <end position="1804"/>
    </location>
</feature>
<feature type="region of interest" description="Disordered" evidence="4">
    <location>
        <begin position="1899"/>
        <end position="1962"/>
    </location>
</feature>
<feature type="region of interest" description="Disordered" evidence="4">
    <location>
        <begin position="1976"/>
        <end position="2010"/>
    </location>
</feature>
<feature type="region of interest" description="Disordered" evidence="4">
    <location>
        <begin position="2067"/>
        <end position="2143"/>
    </location>
</feature>
<feature type="region of interest" description="Disordered" evidence="4">
    <location>
        <begin position="2267"/>
        <end position="2294"/>
    </location>
</feature>
<feature type="region of interest" description="Disordered" evidence="4">
    <location>
        <begin position="2307"/>
        <end position="2343"/>
    </location>
</feature>
<feature type="region of interest" description="Disordered" evidence="4">
    <location>
        <begin position="2372"/>
        <end position="2391"/>
    </location>
</feature>
<feature type="region of interest" description="Disordered" evidence="4">
    <location>
        <begin position="2429"/>
        <end position="2448"/>
    </location>
</feature>
<feature type="region of interest" description="Disordered" evidence="4">
    <location>
        <begin position="2496"/>
        <end position="2620"/>
    </location>
</feature>
<feature type="coiled-coil region" evidence="2">
    <location>
        <begin position="1596"/>
        <end position="1648"/>
    </location>
</feature>
<feature type="compositionally biased region" description="Polar residues" evidence="4">
    <location>
        <begin position="1012"/>
        <end position="1029"/>
    </location>
</feature>
<feature type="compositionally biased region" description="Low complexity" evidence="4">
    <location>
        <begin position="1192"/>
        <end position="1206"/>
    </location>
</feature>
<feature type="compositionally biased region" description="Basic and acidic residues" evidence="4">
    <location>
        <begin position="1210"/>
        <end position="1221"/>
    </location>
</feature>
<feature type="compositionally biased region" description="Basic and acidic residues" evidence="4">
    <location>
        <begin position="1636"/>
        <end position="1647"/>
    </location>
</feature>
<feature type="compositionally biased region" description="Acidic residues" evidence="4">
    <location>
        <begin position="1648"/>
        <end position="1661"/>
    </location>
</feature>
<feature type="compositionally biased region" description="Low complexity" evidence="4">
    <location>
        <begin position="1665"/>
        <end position="1681"/>
    </location>
</feature>
<feature type="compositionally biased region" description="Low complexity" evidence="4">
    <location>
        <begin position="1769"/>
        <end position="1791"/>
    </location>
</feature>
<feature type="compositionally biased region" description="Polar residues" evidence="4">
    <location>
        <begin position="1899"/>
        <end position="1913"/>
    </location>
</feature>
<feature type="compositionally biased region" description="Low complexity" evidence="4">
    <location>
        <begin position="1917"/>
        <end position="1946"/>
    </location>
</feature>
<feature type="compositionally biased region" description="Polar residues" evidence="4">
    <location>
        <begin position="1982"/>
        <end position="1993"/>
    </location>
</feature>
<feature type="compositionally biased region" description="Low complexity" evidence="4">
    <location>
        <begin position="1994"/>
        <end position="2006"/>
    </location>
</feature>
<feature type="compositionally biased region" description="Low complexity" evidence="4">
    <location>
        <begin position="2067"/>
        <end position="2078"/>
    </location>
</feature>
<feature type="compositionally biased region" description="Low complexity" evidence="4">
    <location>
        <begin position="2100"/>
        <end position="2118"/>
    </location>
</feature>
<feature type="compositionally biased region" description="Polar residues" evidence="4">
    <location>
        <begin position="2267"/>
        <end position="2286"/>
    </location>
</feature>
<feature type="compositionally biased region" description="Polar residues" evidence="4">
    <location>
        <begin position="2325"/>
        <end position="2339"/>
    </location>
</feature>
<feature type="compositionally biased region" description="Polar residues" evidence="4">
    <location>
        <begin position="2505"/>
        <end position="2528"/>
    </location>
</feature>
<feature type="compositionally biased region" description="Pro residues" evidence="4">
    <location>
        <begin position="2535"/>
        <end position="2547"/>
    </location>
</feature>
<feature type="compositionally biased region" description="Polar residues" evidence="4">
    <location>
        <begin position="2552"/>
        <end position="2565"/>
    </location>
</feature>
<feature type="compositionally biased region" description="Low complexity" evidence="4">
    <location>
        <begin position="2566"/>
        <end position="2588"/>
    </location>
</feature>
<feature type="compositionally biased region" description="Low complexity" evidence="4">
    <location>
        <begin position="2597"/>
        <end position="2620"/>
    </location>
</feature>
<feature type="splice variant" id="VSP_052627" description="In isoform c and isoform d." evidence="5">
    <location>
        <begin position="1"/>
        <end position="1193"/>
    </location>
</feature>
<feature type="splice variant" id="VSP_053226" description="In isoform e and isoform h." evidence="5">
    <location>
        <begin position="1"/>
        <end position="1115"/>
    </location>
</feature>
<feature type="splice variant" id="VSP_053227" description="In isoform f, isoform g and isoform h." evidence="5">
    <original>L</original>
    <variation>FSV</variation>
    <location>
        <position position="1136"/>
    </location>
</feature>
<feature type="splice variant" id="VSP_052628" description="In isoform b, isoform c, isoform e, isoform g and isoform h." evidence="5">
    <location>
        <begin position="1906"/>
        <end position="1927"/>
    </location>
</feature>
<accession>Q21920</accession>
<accession>A3RMT6</accession>
<accession>A3RMT7</accession>
<accession>D3YT52</accession>
<accession>L8E837</accession>
<accession>L8E927</accession>
<accession>L8EC41</accession>
<accession>Q21927</accession>
<accession>Q9TW88</accession>
<gene>
    <name evidence="7" type="primary">mask-1</name>
    <name evidence="7" type="ORF">R11A8.7</name>
</gene>
<keyword id="KW-0025">Alternative splicing</keyword>
<keyword id="KW-0040">ANK repeat</keyword>
<keyword id="KW-0175">Coiled coil</keyword>
<keyword id="KW-0963">Cytoplasm</keyword>
<keyword id="KW-1185">Reference proteome</keyword>
<keyword id="KW-0677">Repeat</keyword>
<keyword id="KW-0694">RNA-binding</keyword>
<organism>
    <name type="scientific">Caenorhabditis elegans</name>
    <dbReference type="NCBI Taxonomy" id="6239"/>
    <lineage>
        <taxon>Eukaryota</taxon>
        <taxon>Metazoa</taxon>
        <taxon>Ecdysozoa</taxon>
        <taxon>Nematoda</taxon>
        <taxon>Chromadorea</taxon>
        <taxon>Rhabditida</taxon>
        <taxon>Rhabditina</taxon>
        <taxon>Rhabditomorpha</taxon>
        <taxon>Rhabditoidea</taxon>
        <taxon>Rhabditidae</taxon>
        <taxon>Peloderinae</taxon>
        <taxon>Caenorhabditis</taxon>
    </lineage>
</organism>
<name>ANKHM_CAEEL</name>
<evidence type="ECO:0000250" key="1">
    <source>
        <dbReference type="UniProtKB" id="Q9VCA8"/>
    </source>
</evidence>
<evidence type="ECO:0000255" key="2"/>
<evidence type="ECO:0000255" key="3">
    <source>
        <dbReference type="PROSITE-ProRule" id="PRU00117"/>
    </source>
</evidence>
<evidence type="ECO:0000256" key="4">
    <source>
        <dbReference type="SAM" id="MobiDB-lite"/>
    </source>
</evidence>
<evidence type="ECO:0000305" key="5"/>
<evidence type="ECO:0000312" key="6">
    <source>
        <dbReference type="EMBL" id="CAM35836.1"/>
    </source>
</evidence>
<evidence type="ECO:0000312" key="7">
    <source>
        <dbReference type="WormBase" id="R11A8.7a"/>
    </source>
</evidence>
<evidence type="ECO:0000312" key="8">
    <source>
        <dbReference type="WormBase" id="R11A8.7b"/>
    </source>
</evidence>
<evidence type="ECO:0000312" key="9">
    <source>
        <dbReference type="WormBase" id="R11A8.7c"/>
    </source>
</evidence>
<evidence type="ECO:0000312" key="10">
    <source>
        <dbReference type="WormBase" id="R11A8.7d"/>
    </source>
</evidence>
<evidence type="ECO:0000312" key="11">
    <source>
        <dbReference type="WormBase" id="R11A8.7e"/>
    </source>
</evidence>
<evidence type="ECO:0000312" key="12">
    <source>
        <dbReference type="WormBase" id="R11A8.7f"/>
    </source>
</evidence>
<evidence type="ECO:0000312" key="13">
    <source>
        <dbReference type="WormBase" id="R11A8.7g"/>
    </source>
</evidence>
<evidence type="ECO:0000312" key="14">
    <source>
        <dbReference type="WormBase" id="R11A8.7h"/>
    </source>
</evidence>
<proteinExistence type="inferred from homology"/>
<sequence length="2620" mass="287078">MAHLNMFNHLIPLEMDMDGADEEKRQRVFSSFYHFGARLYDCLHTIAIEIEDDDCEHFPTKAISTVLKILNFEHFLSSDKCRFPPVSNLLDIIESRQMDDCQILFKISDLLEDHKSEKPERFGPYNPLDPKKVPIKNAVDALTSVSSMAYSFLATTFAEELMKAAIRDIYVFDEDSLEDNDETQLSDENGVFDSTPSNNEKKDSIINFRQLPSIDSQIVQQNAMLLLAARVGIEQFVEYSHEIGVMQFRGDKLSKITPLMEAAASSSETIVRRLLELGADPNVASIPNCNTALIYAASTDGRDVVREILMTEGPKKPDVYLINNHYHDAMMEVALVGGTDTLKEFLEMGYRPRFLNLRQQERDSALTLSAQKGHIKIVTAIMDYYEKNPPQTEEEKQELCLERYSALMEAAMEGHIDVCKLMLSRGTPADLCTEVTIEPSPLIVASAGGYPEVVEVLLAAGAKIEELSNKKNTPLMEACAGDQGDQAGVVKLLLSKHAEVDVSNPDTGDTPLSLAARNGYIAIMKMLIEKGGDLTAGKTSPIVEAARNGHLECIQFILAHCKTIPQDQLSRALVSAADFGSLLIVEEVIRAGADLNFEQDERTALMKAAKGDHFEVVQLLLSKGASVNFKSSKNDATALSLACSEGNMEIAEFLIRNGADPMLKMDDGVNCFMEVARHGSIDLMSLLVEFTKGNMPMDKDPPKLGITRCSSKNGKKRRKGMPSGQDMLSMFNGMYPKRKGSKQMGLHEMPFSTQEIDMLTHLLKMQQQMVAYETHKSTETETAEIKKVLRAIESVYGFTSEGKINFPPPPNRQDMDKLYNGELVPNIKLWAELVSHGWLEMERKIGRPIELSSFQQCNEGHSTNAAAAVSAVAAAATGMDSQTYLASVFAKMNNGEEMPRVPATVGSLNAASAAMTGISFHSDDAMRLFGGASFATKLLSDNKKPCNHQQYASIHHIQEGAFRAALIKMSSMFRERNGCAISVRDMESNFPIEHQEERFGPSKPIPSGPKKTSLTAPNPADTSDVTTKQPGAMKKDGLEAKKIYPGIIKLAAEMEKLFRANPTESNRDLALTTAYIASALPDHFCSELQLESGDRILKKLLSGLTEKQKNTVISRMRSVVNKESGSSLLRRSVDNLTDKRIKEDYLKLFRDSTDCAFYDKCVQEKNHLLKAIEIQKKGKTSSGTLISTSSKSLMAKSVQSQQQQGQLRRTHSEGDGAERAKSRSNAIDKATETTLETPLTIACANGHKDIVELLLKEGANIEHRDKKGFSPLIIAATAGHSSVVEVLLKNHAAIEAQSDRTKDTALSLACSGGRKDVVELLLAHGANKEHRNVSDYTPLSLASSGGYIEIVNMLLTAGSEINSRTGSKLGISPLMLASMNGHREATRVLLEKGSDINAQIETNRNTALTLASFQGRTEVVKLLLAYNANVEHRAKTGLTPLMECASGGYVDVGNLLIAAGADTNASPVQQTKDTALTISAEKGHEKFVRMLLNGDAAVDVRNKKGCTALWLACNGGYLSTAQALLEKGADPDMFDNRKISPMMAAFRKGHVEIVKYMVNSAKQFPNEQDLIRAQQTAETDDIKKKCGECIDIIRSAKKAQAESAELAAQKLLELIDEEKVQKEVKKQKQKDKKIKKKEEKKIKKQEAEPEPEPEPEPEPVPEPEPVVISEPVPEPVPIVVEEPPKEPPKPRRNRRKTNPDGVPKGPKVVVEPKASIAEEPSEMPYEPIVVTIPPPAKIHAPMVSPGSYSESEEWCKAGKEGKKVKSSKKSGYGAPSSAGSSQAKESSTTSSVISDQTPPYEIDTRNESSWKLTIPAYAASRVIGKGGSNVNAVREATGAIIEINKIQESNKQAERTVLAKGTPEMVRYAMNIINYMIYDADVLVTDAIRTVLRGNLSVASSFSSEGTSKSAVDSTYAPSSIPKSLSSASIARQSASPIPQQSSQRSAKSHHHQKDSGGGNVWHQRMAAREEKVEPLMETKRISQSPKQAPQIPSTQQQSKLQSRQDQASETLVRVAPAENFVAPVPASSIAAPSRPNQNVLDRVIAPSLRREPTTTPLIQPVHPVQSVQSVQHMQQQQLARPEQKLAQPCLPDPIGQRYSQPISRPQSSVQVSQSSFSKAPGTRPSTDFSRAPGPPQQQQTQNNMTTARNELFDEQLAFGQFKPTGMNSVATVIPAKPSVNNQNDDKNGNSDDFDFSKMRMFDEGKVGNIWGKSDEDSAWGGLFSQFLPQLGANSSLNNSNSKNDSSNEWGQNEFISQLLINSSLPNATSSPQGASTISSAPVQQPSTSSVTTGLSSLELKGWMPASFAPSARDPNRSQPPLFARSQSNSVANSTSTNIQQQQQQQIQHLQQQQALQQQQQRIQQFQQQYQQHQSQSSQQPSDLMSSKFSMLQSQQQQQQLYNQMQSLGQDGQGSNLYNHLAAQLLTHQESSTGAPGPTSSQLANSYYPSPSYTDASVLGQISMPSLSQRGIKQFDGFNNDSDGVIAAILEQQQQQKKQGLAQQSFMHNSQQPQPFGAPSNASANQSRLGMIQPRPQPPPFVAPQAPPGFSSLGNASSTTNPSRTSMQQMYQQYGQSSQQQPYGQMPQAMDWNRLGQQQQSASGQQNHQSSSSNKWSSNW</sequence>
<protein>
    <recommendedName>
        <fullName evidence="5">Ankyrin repeat and KH domain-containing protein mask-1</fullName>
    </recommendedName>
    <alternativeName>
        <fullName evidence="7">Multiple ankyrin repeats single KH domain homolog</fullName>
    </alternativeName>
</protein>